<accession>B0RPZ6</accession>
<evidence type="ECO:0000255" key="1">
    <source>
        <dbReference type="HAMAP-Rule" id="MF_01633"/>
    </source>
</evidence>
<sequence>MKKAVVLLSGGMDSAAVIALAQEQGFAVHALSVRYGQRHTSELDAAARVAAAQGVVAHKVVDVDLRSIGGSALTADIDVPEAGGAGIPVTYVPARNTIMLSLALGWAEVVGANDLFCGVNAVDYSGYPDCRPEFVRAFEVLANLATKAGVEGAGLRVHAPLQFLSKADIVRAGVRLGVDFGLTVSCYNADADGRACGHCDACRLRAAGFADAGVPDPTHYAISS</sequence>
<organism>
    <name type="scientific">Xanthomonas campestris pv. campestris (strain B100)</name>
    <dbReference type="NCBI Taxonomy" id="509169"/>
    <lineage>
        <taxon>Bacteria</taxon>
        <taxon>Pseudomonadati</taxon>
        <taxon>Pseudomonadota</taxon>
        <taxon>Gammaproteobacteria</taxon>
        <taxon>Lysobacterales</taxon>
        <taxon>Lysobacteraceae</taxon>
        <taxon>Xanthomonas</taxon>
    </lineage>
</organism>
<comment type="function">
    <text evidence="1">Catalyzes the ATP-dependent conversion of 7-carboxy-7-deazaguanine (CDG) to 7-cyano-7-deazaguanine (preQ(0)).</text>
</comment>
<comment type="catalytic activity">
    <reaction evidence="1">
        <text>7-carboxy-7-deazaguanine + NH4(+) + ATP = 7-cyano-7-deazaguanine + ADP + phosphate + H2O + H(+)</text>
        <dbReference type="Rhea" id="RHEA:27982"/>
        <dbReference type="ChEBI" id="CHEBI:15377"/>
        <dbReference type="ChEBI" id="CHEBI:15378"/>
        <dbReference type="ChEBI" id="CHEBI:28938"/>
        <dbReference type="ChEBI" id="CHEBI:30616"/>
        <dbReference type="ChEBI" id="CHEBI:43474"/>
        <dbReference type="ChEBI" id="CHEBI:45075"/>
        <dbReference type="ChEBI" id="CHEBI:61036"/>
        <dbReference type="ChEBI" id="CHEBI:456216"/>
        <dbReference type="EC" id="6.3.4.20"/>
    </reaction>
</comment>
<comment type="cofactor">
    <cofactor evidence="1">
        <name>Zn(2+)</name>
        <dbReference type="ChEBI" id="CHEBI:29105"/>
    </cofactor>
    <text evidence="1">Binds 1 zinc ion per subunit.</text>
</comment>
<comment type="pathway">
    <text evidence="1">Purine metabolism; 7-cyano-7-deazaguanine biosynthesis.</text>
</comment>
<comment type="similarity">
    <text evidence="1">Belongs to the QueC family.</text>
</comment>
<name>QUEC_XANCB</name>
<gene>
    <name evidence="1" type="primary">queC</name>
    <name type="ordered locus">xcc-b100_1183</name>
</gene>
<dbReference type="EC" id="6.3.4.20" evidence="1"/>
<dbReference type="EMBL" id="AM920689">
    <property type="protein sequence ID" value="CAP50531.1"/>
    <property type="molecule type" value="Genomic_DNA"/>
</dbReference>
<dbReference type="SMR" id="B0RPZ6"/>
<dbReference type="KEGG" id="xca:xcc-b100_1183"/>
<dbReference type="HOGENOM" id="CLU_081854_1_1_6"/>
<dbReference type="UniPathway" id="UPA00391"/>
<dbReference type="Proteomes" id="UP000001188">
    <property type="component" value="Chromosome"/>
</dbReference>
<dbReference type="GO" id="GO:0005524">
    <property type="term" value="F:ATP binding"/>
    <property type="evidence" value="ECO:0007669"/>
    <property type="project" value="UniProtKB-UniRule"/>
</dbReference>
<dbReference type="GO" id="GO:0016879">
    <property type="term" value="F:ligase activity, forming carbon-nitrogen bonds"/>
    <property type="evidence" value="ECO:0007669"/>
    <property type="project" value="UniProtKB-UniRule"/>
</dbReference>
<dbReference type="GO" id="GO:0008270">
    <property type="term" value="F:zinc ion binding"/>
    <property type="evidence" value="ECO:0007669"/>
    <property type="project" value="UniProtKB-UniRule"/>
</dbReference>
<dbReference type="GO" id="GO:0008616">
    <property type="term" value="P:queuosine biosynthetic process"/>
    <property type="evidence" value="ECO:0007669"/>
    <property type="project" value="UniProtKB-UniRule"/>
</dbReference>
<dbReference type="CDD" id="cd01995">
    <property type="entry name" value="QueC-like"/>
    <property type="match status" value="1"/>
</dbReference>
<dbReference type="FunFam" id="3.40.50.620:FF:000131">
    <property type="entry name" value="7-cyano-7-deazaguanine synthase"/>
    <property type="match status" value="1"/>
</dbReference>
<dbReference type="Gene3D" id="3.40.50.620">
    <property type="entry name" value="HUPs"/>
    <property type="match status" value="1"/>
</dbReference>
<dbReference type="HAMAP" id="MF_01633">
    <property type="entry name" value="QueC"/>
    <property type="match status" value="1"/>
</dbReference>
<dbReference type="InterPro" id="IPR018317">
    <property type="entry name" value="QueC"/>
</dbReference>
<dbReference type="InterPro" id="IPR014729">
    <property type="entry name" value="Rossmann-like_a/b/a_fold"/>
</dbReference>
<dbReference type="NCBIfam" id="TIGR00364">
    <property type="entry name" value="7-cyano-7-deazaguanine synthase QueC"/>
    <property type="match status" value="1"/>
</dbReference>
<dbReference type="PANTHER" id="PTHR42914">
    <property type="entry name" value="7-CYANO-7-DEAZAGUANINE SYNTHASE"/>
    <property type="match status" value="1"/>
</dbReference>
<dbReference type="PANTHER" id="PTHR42914:SF1">
    <property type="entry name" value="7-CYANO-7-DEAZAGUANINE SYNTHASE"/>
    <property type="match status" value="1"/>
</dbReference>
<dbReference type="Pfam" id="PF06508">
    <property type="entry name" value="QueC"/>
    <property type="match status" value="1"/>
</dbReference>
<dbReference type="PIRSF" id="PIRSF006293">
    <property type="entry name" value="ExsB"/>
    <property type="match status" value="1"/>
</dbReference>
<dbReference type="SUPFAM" id="SSF52402">
    <property type="entry name" value="Adenine nucleotide alpha hydrolases-like"/>
    <property type="match status" value="1"/>
</dbReference>
<keyword id="KW-0067">ATP-binding</keyword>
<keyword id="KW-0436">Ligase</keyword>
<keyword id="KW-0479">Metal-binding</keyword>
<keyword id="KW-0547">Nucleotide-binding</keyword>
<keyword id="KW-0671">Queuosine biosynthesis</keyword>
<keyword id="KW-0862">Zinc</keyword>
<protein>
    <recommendedName>
        <fullName evidence="1">7-cyano-7-deazaguanine synthase</fullName>
        <ecNumber evidence="1">6.3.4.20</ecNumber>
    </recommendedName>
    <alternativeName>
        <fullName evidence="1">7-cyano-7-carbaguanine synthase</fullName>
    </alternativeName>
    <alternativeName>
        <fullName evidence="1">PreQ(0) synthase</fullName>
    </alternativeName>
    <alternativeName>
        <fullName evidence="1">Queuosine biosynthesis protein QueC</fullName>
    </alternativeName>
</protein>
<proteinExistence type="inferred from homology"/>
<feature type="chain" id="PRO_1000186644" description="7-cyano-7-deazaguanine synthase">
    <location>
        <begin position="1"/>
        <end position="224"/>
    </location>
</feature>
<feature type="binding site" evidence="1">
    <location>
        <begin position="8"/>
        <end position="18"/>
    </location>
    <ligand>
        <name>ATP</name>
        <dbReference type="ChEBI" id="CHEBI:30616"/>
    </ligand>
</feature>
<feature type="binding site" evidence="1">
    <location>
        <position position="186"/>
    </location>
    <ligand>
        <name>Zn(2+)</name>
        <dbReference type="ChEBI" id="CHEBI:29105"/>
    </ligand>
</feature>
<feature type="binding site" evidence="1">
    <location>
        <position position="196"/>
    </location>
    <ligand>
        <name>Zn(2+)</name>
        <dbReference type="ChEBI" id="CHEBI:29105"/>
    </ligand>
</feature>
<feature type="binding site" evidence="1">
    <location>
        <position position="199"/>
    </location>
    <ligand>
        <name>Zn(2+)</name>
        <dbReference type="ChEBI" id="CHEBI:29105"/>
    </ligand>
</feature>
<feature type="binding site" evidence="1">
    <location>
        <position position="202"/>
    </location>
    <ligand>
        <name>Zn(2+)</name>
        <dbReference type="ChEBI" id="CHEBI:29105"/>
    </ligand>
</feature>
<reference key="1">
    <citation type="journal article" date="2008" name="J. Biotechnol.">
        <title>The genome of Xanthomonas campestris pv. campestris B100 and its use for the reconstruction of metabolic pathways involved in xanthan biosynthesis.</title>
        <authorList>
            <person name="Vorhoelter F.-J."/>
            <person name="Schneiker S."/>
            <person name="Goesmann A."/>
            <person name="Krause L."/>
            <person name="Bekel T."/>
            <person name="Kaiser O."/>
            <person name="Linke B."/>
            <person name="Patschkowski T."/>
            <person name="Rueckert C."/>
            <person name="Schmid J."/>
            <person name="Sidhu V.K."/>
            <person name="Sieber V."/>
            <person name="Tauch A."/>
            <person name="Watt S.A."/>
            <person name="Weisshaar B."/>
            <person name="Becker A."/>
            <person name="Niehaus K."/>
            <person name="Puehler A."/>
        </authorList>
    </citation>
    <scope>NUCLEOTIDE SEQUENCE [LARGE SCALE GENOMIC DNA]</scope>
    <source>
        <strain>B100</strain>
    </source>
</reference>